<proteinExistence type="evidence at protein level"/>
<evidence type="ECO:0000250" key="1">
    <source>
        <dbReference type="UniProtKB" id="O43805"/>
    </source>
</evidence>
<evidence type="ECO:0000250" key="2">
    <source>
        <dbReference type="UniProtKB" id="Q9XF62"/>
    </source>
</evidence>
<evidence type="ECO:0000255" key="3"/>
<evidence type="ECO:0000269" key="4">
    <source>
    </source>
</evidence>
<evidence type="ECO:0000303" key="5">
    <source>
    </source>
</evidence>
<evidence type="ECO:0000305" key="6"/>
<evidence type="ECO:0000312" key="7">
    <source>
        <dbReference type="MGI" id="MGI:1915725"/>
    </source>
</evidence>
<reference key="1">
    <citation type="submission" date="2000-04" db="EMBL/GenBank/DDBJ databases">
        <title>Isolation of full-length cDNA clones from mouse brain cDNA library made by oligo-capping method.</title>
        <authorList>
            <person name="Osada N."/>
            <person name="Kusuda J."/>
            <person name="Tanuma R."/>
            <person name="Ito A."/>
            <person name="Hirata M."/>
            <person name="Sugano S."/>
            <person name="Hashimoto K."/>
        </authorList>
    </citation>
    <scope>NUCLEOTIDE SEQUENCE [LARGE SCALE MRNA]</scope>
    <source>
        <strain>C57BL/6J</strain>
        <tissue>Brain</tissue>
    </source>
</reference>
<reference key="2">
    <citation type="journal article" date="2005" name="Science">
        <title>The transcriptional landscape of the mammalian genome.</title>
        <authorList>
            <person name="Carninci P."/>
            <person name="Kasukawa T."/>
            <person name="Katayama S."/>
            <person name="Gough J."/>
            <person name="Frith M.C."/>
            <person name="Maeda N."/>
            <person name="Oyama R."/>
            <person name="Ravasi T."/>
            <person name="Lenhard B."/>
            <person name="Wells C."/>
            <person name="Kodzius R."/>
            <person name="Shimokawa K."/>
            <person name="Bajic V.B."/>
            <person name="Brenner S.E."/>
            <person name="Batalov S."/>
            <person name="Forrest A.R."/>
            <person name="Zavolan M."/>
            <person name="Davis M.J."/>
            <person name="Wilming L.G."/>
            <person name="Aidinis V."/>
            <person name="Allen J.E."/>
            <person name="Ambesi-Impiombato A."/>
            <person name="Apweiler R."/>
            <person name="Aturaliya R.N."/>
            <person name="Bailey T.L."/>
            <person name="Bansal M."/>
            <person name="Baxter L."/>
            <person name="Beisel K.W."/>
            <person name="Bersano T."/>
            <person name="Bono H."/>
            <person name="Chalk A.M."/>
            <person name="Chiu K.P."/>
            <person name="Choudhary V."/>
            <person name="Christoffels A."/>
            <person name="Clutterbuck D.R."/>
            <person name="Crowe M.L."/>
            <person name="Dalla E."/>
            <person name="Dalrymple B.P."/>
            <person name="de Bono B."/>
            <person name="Della Gatta G."/>
            <person name="di Bernardo D."/>
            <person name="Down T."/>
            <person name="Engstrom P."/>
            <person name="Fagiolini M."/>
            <person name="Faulkner G."/>
            <person name="Fletcher C.F."/>
            <person name="Fukushima T."/>
            <person name="Furuno M."/>
            <person name="Futaki S."/>
            <person name="Gariboldi M."/>
            <person name="Georgii-Hemming P."/>
            <person name="Gingeras T.R."/>
            <person name="Gojobori T."/>
            <person name="Green R.E."/>
            <person name="Gustincich S."/>
            <person name="Harbers M."/>
            <person name="Hayashi Y."/>
            <person name="Hensch T.K."/>
            <person name="Hirokawa N."/>
            <person name="Hill D."/>
            <person name="Huminiecki L."/>
            <person name="Iacono M."/>
            <person name="Ikeo K."/>
            <person name="Iwama A."/>
            <person name="Ishikawa T."/>
            <person name="Jakt M."/>
            <person name="Kanapin A."/>
            <person name="Katoh M."/>
            <person name="Kawasawa Y."/>
            <person name="Kelso J."/>
            <person name="Kitamura H."/>
            <person name="Kitano H."/>
            <person name="Kollias G."/>
            <person name="Krishnan S.P."/>
            <person name="Kruger A."/>
            <person name="Kummerfeld S.K."/>
            <person name="Kurochkin I.V."/>
            <person name="Lareau L.F."/>
            <person name="Lazarevic D."/>
            <person name="Lipovich L."/>
            <person name="Liu J."/>
            <person name="Liuni S."/>
            <person name="McWilliam S."/>
            <person name="Madan Babu M."/>
            <person name="Madera M."/>
            <person name="Marchionni L."/>
            <person name="Matsuda H."/>
            <person name="Matsuzawa S."/>
            <person name="Miki H."/>
            <person name="Mignone F."/>
            <person name="Miyake S."/>
            <person name="Morris K."/>
            <person name="Mottagui-Tabar S."/>
            <person name="Mulder N."/>
            <person name="Nakano N."/>
            <person name="Nakauchi H."/>
            <person name="Ng P."/>
            <person name="Nilsson R."/>
            <person name="Nishiguchi S."/>
            <person name="Nishikawa S."/>
            <person name="Nori F."/>
            <person name="Ohara O."/>
            <person name="Okazaki Y."/>
            <person name="Orlando V."/>
            <person name="Pang K.C."/>
            <person name="Pavan W.J."/>
            <person name="Pavesi G."/>
            <person name="Pesole G."/>
            <person name="Petrovsky N."/>
            <person name="Piazza S."/>
            <person name="Reed J."/>
            <person name="Reid J.F."/>
            <person name="Ring B.Z."/>
            <person name="Ringwald M."/>
            <person name="Rost B."/>
            <person name="Ruan Y."/>
            <person name="Salzberg S.L."/>
            <person name="Sandelin A."/>
            <person name="Schneider C."/>
            <person name="Schoenbach C."/>
            <person name="Sekiguchi K."/>
            <person name="Semple C.A."/>
            <person name="Seno S."/>
            <person name="Sessa L."/>
            <person name="Sheng Y."/>
            <person name="Shibata Y."/>
            <person name="Shimada H."/>
            <person name="Shimada K."/>
            <person name="Silva D."/>
            <person name="Sinclair B."/>
            <person name="Sperling S."/>
            <person name="Stupka E."/>
            <person name="Sugiura K."/>
            <person name="Sultana R."/>
            <person name="Takenaka Y."/>
            <person name="Taki K."/>
            <person name="Tammoja K."/>
            <person name="Tan S.L."/>
            <person name="Tang S."/>
            <person name="Taylor M.S."/>
            <person name="Tegner J."/>
            <person name="Teichmann S.A."/>
            <person name="Ueda H.R."/>
            <person name="van Nimwegen E."/>
            <person name="Verardo R."/>
            <person name="Wei C.L."/>
            <person name="Yagi K."/>
            <person name="Yamanishi H."/>
            <person name="Zabarovsky E."/>
            <person name="Zhu S."/>
            <person name="Zimmer A."/>
            <person name="Hide W."/>
            <person name="Bult C."/>
            <person name="Grimmond S.M."/>
            <person name="Teasdale R.D."/>
            <person name="Liu E.T."/>
            <person name="Brusic V."/>
            <person name="Quackenbush J."/>
            <person name="Wahlestedt C."/>
            <person name="Mattick J.S."/>
            <person name="Hume D.A."/>
            <person name="Kai C."/>
            <person name="Sasaki D."/>
            <person name="Tomaru Y."/>
            <person name="Fukuda S."/>
            <person name="Kanamori-Katayama M."/>
            <person name="Suzuki M."/>
            <person name="Aoki J."/>
            <person name="Arakawa T."/>
            <person name="Iida J."/>
            <person name="Imamura K."/>
            <person name="Itoh M."/>
            <person name="Kato T."/>
            <person name="Kawaji H."/>
            <person name="Kawagashira N."/>
            <person name="Kawashima T."/>
            <person name="Kojima M."/>
            <person name="Kondo S."/>
            <person name="Konno H."/>
            <person name="Nakano K."/>
            <person name="Ninomiya N."/>
            <person name="Nishio T."/>
            <person name="Okada M."/>
            <person name="Plessy C."/>
            <person name="Shibata K."/>
            <person name="Shiraki T."/>
            <person name="Suzuki S."/>
            <person name="Tagami M."/>
            <person name="Waki K."/>
            <person name="Watahiki A."/>
            <person name="Okamura-Oho Y."/>
            <person name="Suzuki H."/>
            <person name="Kawai J."/>
            <person name="Hayashizaki Y."/>
        </authorList>
    </citation>
    <scope>NUCLEOTIDE SEQUENCE [LARGE SCALE MRNA]</scope>
    <source>
        <strain>NOD</strain>
        <tissue>Thymus</tissue>
    </source>
</reference>
<reference key="3">
    <citation type="journal article" date="2004" name="Genome Res.">
        <title>The status, quality, and expansion of the NIH full-length cDNA project: the Mammalian Gene Collection (MGC).</title>
        <authorList>
            <consortium name="The MGC Project Team"/>
        </authorList>
    </citation>
    <scope>NUCLEOTIDE SEQUENCE [LARGE SCALE MRNA]</scope>
    <source>
        <strain>Czech II</strain>
        <strain>FVB/N</strain>
        <tissue>Liver</tissue>
        <tissue>Mammary tumor</tissue>
    </source>
</reference>
<reference key="4">
    <citation type="journal article" date="2010" name="Cell">
        <title>A tissue-specific atlas of mouse protein phosphorylation and expression.</title>
        <authorList>
            <person name="Huttlin E.L."/>
            <person name="Jedrychowski M.P."/>
            <person name="Elias J.E."/>
            <person name="Goswami T."/>
            <person name="Rad R."/>
            <person name="Beausoleil S.A."/>
            <person name="Villen J."/>
            <person name="Haas W."/>
            <person name="Sowa M.E."/>
            <person name="Gygi S.P."/>
        </authorList>
    </citation>
    <scope>IDENTIFICATION BY MASS SPECTROMETRY [LARGE SCALE ANALYSIS]</scope>
    <source>
        <tissue>Testis</tissue>
    </source>
</reference>
<reference key="5">
    <citation type="journal article" date="2018" name="Nat. Cell Biol.">
        <title>Direct induction of microtubule branching by microtubule nucleation factor SSNA1.</title>
        <authorList>
            <person name="Basnet N."/>
            <person name="Nedozralova H."/>
            <person name="Crevenna A.H."/>
            <person name="Bodakuntla S."/>
            <person name="Schlichthaerle T."/>
            <person name="Taschner M."/>
            <person name="Cardone G."/>
            <person name="Janke C."/>
            <person name="Jungmann R."/>
            <person name="Magiera M.M."/>
            <person name="Biertuempfel C."/>
            <person name="Mizuno N."/>
        </authorList>
    </citation>
    <scope>FUNCTION</scope>
    <scope>SUBCELLULAR LOCATION</scope>
</reference>
<dbReference type="EMBL" id="AB041656">
    <property type="protein sequence ID" value="BAA95103.1"/>
    <property type="molecule type" value="mRNA"/>
</dbReference>
<dbReference type="EMBL" id="AK088418">
    <property type="protein sequence ID" value="BAC40344.1"/>
    <property type="molecule type" value="mRNA"/>
</dbReference>
<dbReference type="EMBL" id="BC037081">
    <property type="protein sequence ID" value="AAH37081.1"/>
    <property type="molecule type" value="mRNA"/>
</dbReference>
<dbReference type="EMBL" id="BC048360">
    <property type="protein sequence ID" value="AAH48360.1"/>
    <property type="molecule type" value="mRNA"/>
</dbReference>
<dbReference type="CCDS" id="CCDS38071.1"/>
<dbReference type="RefSeq" id="NP_075953.1">
    <property type="nucleotide sequence ID" value="NM_023464.2"/>
</dbReference>
<dbReference type="SMR" id="Q9JJ94"/>
<dbReference type="BioGRID" id="212871">
    <property type="interactions" value="3"/>
</dbReference>
<dbReference type="FunCoup" id="Q9JJ94">
    <property type="interactions" value="349"/>
</dbReference>
<dbReference type="IntAct" id="Q9JJ94">
    <property type="interactions" value="4"/>
</dbReference>
<dbReference type="STRING" id="10090.ENSMUSP00000028342"/>
<dbReference type="PhosphoSitePlus" id="Q9JJ94"/>
<dbReference type="SwissPalm" id="Q9JJ94"/>
<dbReference type="PaxDb" id="10090-ENSMUSP00000028342"/>
<dbReference type="PeptideAtlas" id="Q9JJ94"/>
<dbReference type="ProteomicsDB" id="262697"/>
<dbReference type="Pumba" id="Q9JJ94"/>
<dbReference type="Antibodypedia" id="32398">
    <property type="antibodies" value="104 antibodies from 23 providers"/>
</dbReference>
<dbReference type="DNASU" id="68475"/>
<dbReference type="Ensembl" id="ENSMUST00000028342.7">
    <property type="protein sequence ID" value="ENSMUSP00000028342.7"/>
    <property type="gene ID" value="ENSMUSG00000026966.7"/>
</dbReference>
<dbReference type="GeneID" id="68475"/>
<dbReference type="KEGG" id="mmu:68475"/>
<dbReference type="UCSC" id="uc008irc.1">
    <property type="organism name" value="mouse"/>
</dbReference>
<dbReference type="AGR" id="MGI:1915725"/>
<dbReference type="CTD" id="8636"/>
<dbReference type="MGI" id="MGI:1915725">
    <property type="gene designation" value="Ssna1"/>
</dbReference>
<dbReference type="VEuPathDB" id="HostDB:ENSMUSG00000026966"/>
<dbReference type="eggNOG" id="ENOG502S16M">
    <property type="taxonomic scope" value="Eukaryota"/>
</dbReference>
<dbReference type="GeneTree" id="ENSGT00390000012318"/>
<dbReference type="HOGENOM" id="CLU_153440_0_0_1"/>
<dbReference type="InParanoid" id="Q9JJ94"/>
<dbReference type="OMA" id="ETKNEYD"/>
<dbReference type="OrthoDB" id="295355at2759"/>
<dbReference type="PhylomeDB" id="Q9JJ94"/>
<dbReference type="TreeFam" id="TF328451"/>
<dbReference type="Reactome" id="R-MMU-2565942">
    <property type="pathway name" value="Regulation of PLK1 Activity at G2/M Transition"/>
</dbReference>
<dbReference type="Reactome" id="R-MMU-380259">
    <property type="pathway name" value="Loss of Nlp from mitotic centrosomes"/>
</dbReference>
<dbReference type="Reactome" id="R-MMU-380270">
    <property type="pathway name" value="Recruitment of mitotic centrosome proteins and complexes"/>
</dbReference>
<dbReference type="Reactome" id="R-MMU-380284">
    <property type="pathway name" value="Loss of proteins required for interphase microtubule organization from the centrosome"/>
</dbReference>
<dbReference type="Reactome" id="R-MMU-380320">
    <property type="pathway name" value="Recruitment of NuMA to mitotic centrosomes"/>
</dbReference>
<dbReference type="Reactome" id="R-MMU-5620912">
    <property type="pathway name" value="Anchoring of the basal body to the plasma membrane"/>
</dbReference>
<dbReference type="Reactome" id="R-MMU-8854518">
    <property type="pathway name" value="AURKA Activation by TPX2"/>
</dbReference>
<dbReference type="BioGRID-ORCS" id="68475">
    <property type="hits" value="0 hits in 76 CRISPR screens"/>
</dbReference>
<dbReference type="ChiTaRS" id="Ssna1">
    <property type="organism name" value="mouse"/>
</dbReference>
<dbReference type="PRO" id="PR:Q9JJ94"/>
<dbReference type="Proteomes" id="UP000000589">
    <property type="component" value="Chromosome 2"/>
</dbReference>
<dbReference type="RNAct" id="Q9JJ94">
    <property type="molecule type" value="protein"/>
</dbReference>
<dbReference type="Bgee" id="ENSMUSG00000026966">
    <property type="expression patterns" value="Expressed in spermatocyte and 269 other cell types or tissues"/>
</dbReference>
<dbReference type="GO" id="GO:0030424">
    <property type="term" value="C:axon"/>
    <property type="evidence" value="ECO:0000314"/>
    <property type="project" value="UniProtKB"/>
</dbReference>
<dbReference type="GO" id="GO:0005930">
    <property type="term" value="C:axoneme"/>
    <property type="evidence" value="ECO:0000250"/>
    <property type="project" value="UniProtKB"/>
</dbReference>
<dbReference type="GO" id="GO:0005814">
    <property type="term" value="C:centriole"/>
    <property type="evidence" value="ECO:0000250"/>
    <property type="project" value="UniProtKB"/>
</dbReference>
<dbReference type="GO" id="GO:0005813">
    <property type="term" value="C:centrosome"/>
    <property type="evidence" value="ECO:0000314"/>
    <property type="project" value="MGI"/>
</dbReference>
<dbReference type="GO" id="GO:0036064">
    <property type="term" value="C:ciliary basal body"/>
    <property type="evidence" value="ECO:0000314"/>
    <property type="project" value="MGI"/>
</dbReference>
<dbReference type="GO" id="GO:0030496">
    <property type="term" value="C:midbody"/>
    <property type="evidence" value="ECO:0000250"/>
    <property type="project" value="UniProtKB"/>
</dbReference>
<dbReference type="GO" id="GO:0031514">
    <property type="term" value="C:motile cilium"/>
    <property type="evidence" value="ECO:0007669"/>
    <property type="project" value="UniProtKB-KW"/>
</dbReference>
<dbReference type="GO" id="GO:0005634">
    <property type="term" value="C:nucleus"/>
    <property type="evidence" value="ECO:0007669"/>
    <property type="project" value="UniProtKB-SubCell"/>
</dbReference>
<dbReference type="GO" id="GO:0005886">
    <property type="term" value="C:plasma membrane"/>
    <property type="evidence" value="ECO:0007669"/>
    <property type="project" value="GOC"/>
</dbReference>
<dbReference type="GO" id="GO:0099512">
    <property type="term" value="C:supramolecular fiber"/>
    <property type="evidence" value="ECO:0000250"/>
    <property type="project" value="UniProtKB"/>
</dbReference>
<dbReference type="GO" id="GO:0042802">
    <property type="term" value="F:identical protein binding"/>
    <property type="evidence" value="ECO:0000353"/>
    <property type="project" value="MGI"/>
</dbReference>
<dbReference type="GO" id="GO:0008017">
    <property type="term" value="F:microtubule binding"/>
    <property type="evidence" value="ECO:0007669"/>
    <property type="project" value="Ensembl"/>
</dbReference>
<dbReference type="GO" id="GO:0140060">
    <property type="term" value="P:axon arborization"/>
    <property type="evidence" value="ECO:0000250"/>
    <property type="project" value="UniProtKB"/>
</dbReference>
<dbReference type="GO" id="GO:0048675">
    <property type="term" value="P:axon extension"/>
    <property type="evidence" value="ECO:0000315"/>
    <property type="project" value="UniProtKB"/>
</dbReference>
<dbReference type="GO" id="GO:0007409">
    <property type="term" value="P:axonogenesis"/>
    <property type="evidence" value="ECO:0000315"/>
    <property type="project" value="UniProtKB"/>
</dbReference>
<dbReference type="GO" id="GO:0051301">
    <property type="term" value="P:cell division"/>
    <property type="evidence" value="ECO:0000250"/>
    <property type="project" value="UniProtKB"/>
</dbReference>
<dbReference type="GO" id="GO:0042073">
    <property type="term" value="P:intraciliary transport"/>
    <property type="evidence" value="ECO:0000315"/>
    <property type="project" value="MGI"/>
</dbReference>
<dbReference type="GO" id="GO:0000226">
    <property type="term" value="P:microtubule cytoskeleton organization"/>
    <property type="evidence" value="ECO:0000250"/>
    <property type="project" value="UniProtKB"/>
</dbReference>
<dbReference type="GO" id="GO:0007020">
    <property type="term" value="P:microtubule nucleation"/>
    <property type="evidence" value="ECO:0007669"/>
    <property type="project" value="Ensembl"/>
</dbReference>
<dbReference type="GO" id="GO:0043113">
    <property type="term" value="P:receptor clustering"/>
    <property type="evidence" value="ECO:0000315"/>
    <property type="project" value="MGI"/>
</dbReference>
<dbReference type="InterPro" id="IPR033362">
    <property type="entry name" value="SSNA1_fam"/>
</dbReference>
<dbReference type="PANTHER" id="PTHR28661:SF1">
    <property type="entry name" value="MICROTUBULE NUCLEATION FACTOR SSNA1"/>
    <property type="match status" value="1"/>
</dbReference>
<dbReference type="PANTHER" id="PTHR28661">
    <property type="entry name" value="SJOEGREN SYNDROME NUCLEAR AUTOANTIGEN 1"/>
    <property type="match status" value="1"/>
</dbReference>
<accession>Q9JJ94</accession>
<name>SSNA1_MOUSE</name>
<keyword id="KW-0007">Acetylation</keyword>
<keyword id="KW-0131">Cell cycle</keyword>
<keyword id="KW-0132">Cell division</keyword>
<keyword id="KW-0966">Cell projection</keyword>
<keyword id="KW-0969">Cilium</keyword>
<keyword id="KW-0175">Coiled coil</keyword>
<keyword id="KW-0963">Cytoplasm</keyword>
<keyword id="KW-0206">Cytoskeleton</keyword>
<keyword id="KW-0282">Flagellum</keyword>
<keyword id="KW-0524">Neurogenesis</keyword>
<keyword id="KW-0539">Nucleus</keyword>
<keyword id="KW-1185">Reference proteome</keyword>
<sequence>MTQQGAALQNYNNELVKCIEELCQKREELCRQIQQEEDEKQRLQNEVRQLTEKLARVNENLARKIASRNEFDRTIAETEAAYLKILESSQTLLSVLKREAGNLTKATASDQKSSGGKDS</sequence>
<feature type="initiator methionine" description="Removed" evidence="1">
    <location>
        <position position="1"/>
    </location>
</feature>
<feature type="chain" id="PRO_0000114484" description="Microtubule nucleation factor SSNA1">
    <location>
        <begin position="2"/>
        <end position="119"/>
    </location>
</feature>
<feature type="region of interest" description="Important for localization to the centrosome" evidence="1">
    <location>
        <begin position="2"/>
        <end position="32"/>
    </location>
</feature>
<feature type="coiled-coil region" evidence="3">
    <location>
        <begin position="13"/>
        <end position="70"/>
    </location>
</feature>
<feature type="modified residue" description="N-acetylthreonine" evidence="1">
    <location>
        <position position="2"/>
    </location>
</feature>
<protein>
    <recommendedName>
        <fullName evidence="5">Microtubule nucleation factor SSNA1</fullName>
    </recommendedName>
    <alternativeName>
        <fullName>Sjoegren syndrome nuclear autoantigen 1 homolog</fullName>
    </alternativeName>
</protein>
<gene>
    <name evidence="7" type="primary">Ssna1</name>
    <name type="ORF">MNCb-2711</name>
</gene>
<organism>
    <name type="scientific">Mus musculus</name>
    <name type="common">Mouse</name>
    <dbReference type="NCBI Taxonomy" id="10090"/>
    <lineage>
        <taxon>Eukaryota</taxon>
        <taxon>Metazoa</taxon>
        <taxon>Chordata</taxon>
        <taxon>Craniata</taxon>
        <taxon>Vertebrata</taxon>
        <taxon>Euteleostomi</taxon>
        <taxon>Mammalia</taxon>
        <taxon>Eutheria</taxon>
        <taxon>Euarchontoglires</taxon>
        <taxon>Glires</taxon>
        <taxon>Rodentia</taxon>
        <taxon>Myomorpha</taxon>
        <taxon>Muroidea</taxon>
        <taxon>Muridae</taxon>
        <taxon>Murinae</taxon>
        <taxon>Mus</taxon>
        <taxon>Mus</taxon>
    </lineage>
</organism>
<comment type="function">
    <text evidence="1 2 4">Microtubule-binding protein which stabilizes dynamic microtubules by slowing growth and shrinkage at both plus and minus ends and serves as a sensor of microtubule damage, protecting microtubules from the microtubule-severing enzyme SPAST (By similarity). Induces microtubule branching which is mediated by the formation of long SSNA1 fibrils which guide microtubule protofilaments to split apart from the mother microtubule and form daughter microtubules (By similarity). Plays a role in axon outgrowth and branching (PubMed:30250060). Required for cell division (By similarity).</text>
</comment>
<comment type="subunit">
    <text evidence="1">Self-associates to form fibrils. Also forms dimers as well as monomers. Interacts with SPAST.</text>
</comment>
<comment type="subcellular location">
    <subcellularLocation>
        <location evidence="1">Nucleus</location>
    </subcellularLocation>
    <subcellularLocation>
        <location evidence="1">Cytoplasm</location>
        <location evidence="1">Cytoskeleton</location>
        <location evidence="1">Microtubule organizing center</location>
        <location evidence="1">Centrosome</location>
    </subcellularLocation>
    <subcellularLocation>
        <location evidence="1">Cytoplasm</location>
        <location evidence="1">Cytoskeleton</location>
        <location evidence="1">Microtubule organizing center</location>
        <location evidence="1">Centrosome</location>
        <location evidence="1">Centriole</location>
    </subcellularLocation>
    <subcellularLocation>
        <location evidence="1">Midbody</location>
    </subcellularLocation>
    <subcellularLocation>
        <location evidence="1">Cytoplasm</location>
        <location evidence="1">Cytoskeleton</location>
        <location evidence="1">Flagellum basal body</location>
    </subcellularLocation>
    <subcellularLocation>
        <location evidence="1">Cytoplasm</location>
        <location evidence="1">Cytoskeleton</location>
        <location evidence="1">Flagellum axoneme</location>
    </subcellularLocation>
    <subcellularLocation>
        <location evidence="4">Cell projection</location>
        <location evidence="4">Axon</location>
    </subcellularLocation>
    <text evidence="1 4">In sperm, strongly expressed in the basal body region with weaker expression in the axoneme (By similarity). Localizes to axon branching points in neurons (PubMed:30250060).</text>
</comment>
<comment type="similarity">
    <text evidence="6">Belongs to the SSNA1 family.</text>
</comment>